<proteinExistence type="inferred from homology"/>
<name>SELO1_DANRE</name>
<accession>Q1LVN8</accession>
<keyword id="KW-0067">ATP-binding</keyword>
<keyword id="KW-0460">Magnesium</keyword>
<keyword id="KW-0479">Metal-binding</keyword>
<keyword id="KW-0496">Mitochondrion</keyword>
<keyword id="KW-0547">Nucleotide-binding</keyword>
<keyword id="KW-0548">Nucleotidyltransferase</keyword>
<keyword id="KW-1185">Reference proteome</keyword>
<keyword id="KW-0712">Selenocysteine</keyword>
<keyword id="KW-0808">Transferase</keyword>
<keyword id="KW-0809">Transit peptide</keyword>
<gene>
    <name evidence="6" type="primary">selenoo1</name>
    <name type="synonym">selo</name>
    <name evidence="7" type="ORF">si:ch211-15i6.2</name>
</gene>
<sequence>MASVGSRLTRFYISRPGVIARRFLAHAGMDDMGVSLSRSSLERLEFDNVALKKLPLDPSTEPGVRQVRGSCFSRVQPTPLKNPEFVAVSAPALALLGLDAEEVLKDPLGPEYLSGSKVMPGSEPAAHCYCGHQFGQFAGQLGDGAACYLGEVKAPAGQSPELLRENPTGRWEIQVKGAGLTPYSRQADGRKVLRSSIREFLCSEAVFALGVPTTRAGSVVTSDSRVMRDIFYDGNPRMERCSVVLRIAPSFIRFGSFEIFKRADEFTGRQGPSYGHDELRTQMLEYVIENFYPEIHRNYPDLTERNTAFFKEVTVRTARLVAQWQCVGFCHGVLNTDNMSILGLTLDYGPFGFMDRFDPDFICNASDNSGRYSYQAQPAICRWNLARLAEALEPDLPPDRAEQVLDEYLPLYNDFYLSNMRKKLGLLRKEEPEDEMLITELMQTMHNTGADFTNTFRSLSQISCPTQEEAEDESETIKQATELLLHQSASLEELKAANRPSMDPRELAMLVSMAQSNPALFQMISDRGTVSRQLERLSRLKELMDTTEEQLRVKHTEHWSDWIQKYRQRLARECESGVDVKDVQTERVRVMNNNNPHVVLRNYIAQNAIAAAENGDFSEVQRVLKVLEKPFSVQEGLEQPGWMGRGGAAIPGERDETEEEGSNSSGAGARGLVPYDSKPPVWANEICVTUSS</sequence>
<protein>
    <recommendedName>
        <fullName evidence="3">Protein adenylyltransferase SelO-1, mitochondrial</fullName>
        <ecNumber evidence="3">2.7.7.108</ecNumber>
    </recommendedName>
    <alternativeName>
        <fullName evidence="3">Selenoprotein O</fullName>
        <shortName evidence="3">SelO</shortName>
    </alternativeName>
</protein>
<feature type="transit peptide" description="Mitochondrion" evidence="4">
    <location>
        <begin position="1"/>
        <end position="24"/>
    </location>
</feature>
<feature type="chain" id="PRO_0000318606" description="Protein adenylyltransferase SelO-1, mitochondrial">
    <location>
        <begin position="25"/>
        <end position="692"/>
    </location>
</feature>
<feature type="region of interest" description="Disordered" evidence="5">
    <location>
        <begin position="637"/>
        <end position="676"/>
    </location>
</feature>
<feature type="active site" description="Proton acceptor" evidence="2">
    <location>
        <position position="337"/>
    </location>
</feature>
<feature type="binding site" evidence="2">
    <location>
        <position position="142"/>
    </location>
    <ligand>
        <name>ATP</name>
        <dbReference type="ChEBI" id="CHEBI:30616"/>
    </ligand>
</feature>
<feature type="binding site" evidence="2">
    <location>
        <position position="144"/>
    </location>
    <ligand>
        <name>ATP</name>
        <dbReference type="ChEBI" id="CHEBI:30616"/>
    </ligand>
</feature>
<feature type="binding site" evidence="2">
    <location>
        <position position="176"/>
    </location>
    <ligand>
        <name>ATP</name>
        <dbReference type="ChEBI" id="CHEBI:30616"/>
    </ligand>
</feature>
<feature type="binding site" evidence="2">
    <location>
        <position position="188"/>
    </location>
    <ligand>
        <name>ATP</name>
        <dbReference type="ChEBI" id="CHEBI:30616"/>
    </ligand>
</feature>
<feature type="binding site" evidence="2">
    <location>
        <position position="189"/>
    </location>
    <ligand>
        <name>ATP</name>
        <dbReference type="ChEBI" id="CHEBI:30616"/>
    </ligand>
</feature>
<feature type="binding site" evidence="2">
    <location>
        <position position="246"/>
    </location>
    <ligand>
        <name>ATP</name>
        <dbReference type="ChEBI" id="CHEBI:30616"/>
    </ligand>
</feature>
<feature type="binding site" evidence="2">
    <location>
        <position position="253"/>
    </location>
    <ligand>
        <name>ATP</name>
        <dbReference type="ChEBI" id="CHEBI:30616"/>
    </ligand>
</feature>
<feature type="binding site" evidence="2">
    <location>
        <position position="338"/>
    </location>
    <ligand>
        <name>Mg(2+)</name>
        <dbReference type="ChEBI" id="CHEBI:18420"/>
    </ligand>
</feature>
<feature type="binding site" evidence="2">
    <location>
        <position position="347"/>
    </location>
    <ligand>
        <name>ATP</name>
        <dbReference type="ChEBI" id="CHEBI:30616"/>
    </ligand>
</feature>
<feature type="binding site" evidence="2">
    <location>
        <position position="347"/>
    </location>
    <ligand>
        <name>Mg(2+)</name>
        <dbReference type="ChEBI" id="CHEBI:18420"/>
    </ligand>
</feature>
<feature type="non-standard amino acid" description="Selenocysteine" evidence="1">
    <location>
        <position position="690"/>
    </location>
</feature>
<comment type="function">
    <text evidence="3">Catalyzes the transfer of adenosine 5'-monophosphate (AMP) to Ser, Thr and Tyr residues of target proteins (AMPylation). May be a redox-active mitochondrial selenoprotein which interacts with a redox target protein.</text>
</comment>
<comment type="catalytic activity">
    <reaction evidence="3">
        <text>L-tyrosyl-[protein] + ATP = O-(5'-adenylyl)-L-tyrosyl-[protein] + diphosphate</text>
        <dbReference type="Rhea" id="RHEA:54288"/>
        <dbReference type="Rhea" id="RHEA-COMP:10136"/>
        <dbReference type="Rhea" id="RHEA-COMP:13846"/>
        <dbReference type="ChEBI" id="CHEBI:30616"/>
        <dbReference type="ChEBI" id="CHEBI:33019"/>
        <dbReference type="ChEBI" id="CHEBI:46858"/>
        <dbReference type="ChEBI" id="CHEBI:83624"/>
        <dbReference type="EC" id="2.7.7.108"/>
    </reaction>
</comment>
<comment type="catalytic activity">
    <reaction evidence="3">
        <text>L-threonyl-[protein] + ATP = 3-O-(5'-adenylyl)-L-threonyl-[protein] + diphosphate</text>
        <dbReference type="Rhea" id="RHEA:54292"/>
        <dbReference type="Rhea" id="RHEA-COMP:11060"/>
        <dbReference type="Rhea" id="RHEA-COMP:13847"/>
        <dbReference type="ChEBI" id="CHEBI:30013"/>
        <dbReference type="ChEBI" id="CHEBI:30616"/>
        <dbReference type="ChEBI" id="CHEBI:33019"/>
        <dbReference type="ChEBI" id="CHEBI:138113"/>
        <dbReference type="EC" id="2.7.7.108"/>
    </reaction>
</comment>
<comment type="catalytic activity">
    <reaction evidence="3">
        <text>L-seryl-[protein] + ATP = 3-O-(5'-adenylyl)-L-seryl-[protein] + diphosphate</text>
        <dbReference type="Rhea" id="RHEA:58120"/>
        <dbReference type="Rhea" id="RHEA-COMP:9863"/>
        <dbReference type="Rhea" id="RHEA-COMP:15073"/>
        <dbReference type="ChEBI" id="CHEBI:29999"/>
        <dbReference type="ChEBI" id="CHEBI:30616"/>
        <dbReference type="ChEBI" id="CHEBI:33019"/>
        <dbReference type="ChEBI" id="CHEBI:142516"/>
        <dbReference type="EC" id="2.7.7.108"/>
    </reaction>
</comment>
<comment type="cofactor">
    <cofactor evidence="2">
        <name>Mg(2+)</name>
        <dbReference type="ChEBI" id="CHEBI:18420"/>
    </cofactor>
</comment>
<comment type="subcellular location">
    <subcellularLocation>
        <location evidence="3">Mitochondrion</location>
    </subcellularLocation>
</comment>
<comment type="similarity">
    <text evidence="6">Belongs to the SELO family.</text>
</comment>
<comment type="sequence caution" evidence="6">
    <conflict type="erroneous termination">
        <sequence resource="EMBL-CDS" id="CAK04189"/>
    </conflict>
    <text>Truncated C-terminus.</text>
</comment>
<dbReference type="EC" id="2.7.7.108" evidence="3"/>
<dbReference type="EMBL" id="BX649566">
    <property type="protein sequence ID" value="CAK04189.1"/>
    <property type="status" value="ALT_SEQ"/>
    <property type="molecule type" value="Genomic_DNA"/>
</dbReference>
<dbReference type="RefSeq" id="NP_001038336.2">
    <property type="nucleotide sequence ID" value="NM_001044871.3"/>
</dbReference>
<dbReference type="FunCoup" id="Q1LVN8">
    <property type="interactions" value="928"/>
</dbReference>
<dbReference type="STRING" id="7955.ENSDARP00000090475"/>
<dbReference type="PaxDb" id="7955-ENSDARP00000090475"/>
<dbReference type="GeneID" id="558648"/>
<dbReference type="KEGG" id="dre:558648"/>
<dbReference type="AGR" id="ZFIN:ZDB-GENE-030131-4485"/>
<dbReference type="CTD" id="558648"/>
<dbReference type="ZFIN" id="ZDB-GENE-030131-4485">
    <property type="gene designation" value="selenoo1"/>
</dbReference>
<dbReference type="eggNOG" id="KOG2542">
    <property type="taxonomic scope" value="Eukaryota"/>
</dbReference>
<dbReference type="InParanoid" id="Q1LVN8"/>
<dbReference type="OrthoDB" id="10254721at2759"/>
<dbReference type="PhylomeDB" id="Q1LVN8"/>
<dbReference type="TreeFam" id="TF323296"/>
<dbReference type="PRO" id="PR:Q1LVN8"/>
<dbReference type="Proteomes" id="UP000000437">
    <property type="component" value="Chromosome 18"/>
</dbReference>
<dbReference type="GO" id="GO:0005739">
    <property type="term" value="C:mitochondrion"/>
    <property type="evidence" value="ECO:0000250"/>
    <property type="project" value="UniProtKB"/>
</dbReference>
<dbReference type="GO" id="GO:0070733">
    <property type="term" value="F:AMPylase activity"/>
    <property type="evidence" value="ECO:0007669"/>
    <property type="project" value="RHEA"/>
</dbReference>
<dbReference type="GO" id="GO:0005524">
    <property type="term" value="F:ATP binding"/>
    <property type="evidence" value="ECO:0007669"/>
    <property type="project" value="UniProtKB-KW"/>
</dbReference>
<dbReference type="GO" id="GO:0046872">
    <property type="term" value="F:metal ion binding"/>
    <property type="evidence" value="ECO:0007669"/>
    <property type="project" value="UniProtKB-KW"/>
</dbReference>
<dbReference type="HAMAP" id="MF_00692">
    <property type="entry name" value="YdiU_SelO"/>
    <property type="match status" value="1"/>
</dbReference>
<dbReference type="InterPro" id="IPR003846">
    <property type="entry name" value="SelO"/>
</dbReference>
<dbReference type="NCBIfam" id="NF000658">
    <property type="entry name" value="PRK00029.1"/>
    <property type="match status" value="1"/>
</dbReference>
<dbReference type="PANTHER" id="PTHR12153:SF15">
    <property type="entry name" value="PROTEIN ADENYLYLTRANSFERASE SELO, MITOCHONDRIAL"/>
    <property type="match status" value="1"/>
</dbReference>
<dbReference type="PANTHER" id="PTHR12153">
    <property type="entry name" value="SELENOPROTEIN O"/>
    <property type="match status" value="1"/>
</dbReference>
<dbReference type="Pfam" id="PF02696">
    <property type="entry name" value="SelO"/>
    <property type="match status" value="1"/>
</dbReference>
<reference key="1">
    <citation type="journal article" date="2013" name="Nature">
        <title>The zebrafish reference genome sequence and its relationship to the human genome.</title>
        <authorList>
            <person name="Howe K."/>
            <person name="Clark M.D."/>
            <person name="Torroja C.F."/>
            <person name="Torrance J."/>
            <person name="Berthelot C."/>
            <person name="Muffato M."/>
            <person name="Collins J.E."/>
            <person name="Humphray S."/>
            <person name="McLaren K."/>
            <person name="Matthews L."/>
            <person name="McLaren S."/>
            <person name="Sealy I."/>
            <person name="Caccamo M."/>
            <person name="Churcher C."/>
            <person name="Scott C."/>
            <person name="Barrett J.C."/>
            <person name="Koch R."/>
            <person name="Rauch G.J."/>
            <person name="White S."/>
            <person name="Chow W."/>
            <person name="Kilian B."/>
            <person name="Quintais L.T."/>
            <person name="Guerra-Assuncao J.A."/>
            <person name="Zhou Y."/>
            <person name="Gu Y."/>
            <person name="Yen J."/>
            <person name="Vogel J.H."/>
            <person name="Eyre T."/>
            <person name="Redmond S."/>
            <person name="Banerjee R."/>
            <person name="Chi J."/>
            <person name="Fu B."/>
            <person name="Langley E."/>
            <person name="Maguire S.F."/>
            <person name="Laird G.K."/>
            <person name="Lloyd D."/>
            <person name="Kenyon E."/>
            <person name="Donaldson S."/>
            <person name="Sehra H."/>
            <person name="Almeida-King J."/>
            <person name="Loveland J."/>
            <person name="Trevanion S."/>
            <person name="Jones M."/>
            <person name="Quail M."/>
            <person name="Willey D."/>
            <person name="Hunt A."/>
            <person name="Burton J."/>
            <person name="Sims S."/>
            <person name="McLay K."/>
            <person name="Plumb B."/>
            <person name="Davis J."/>
            <person name="Clee C."/>
            <person name="Oliver K."/>
            <person name="Clark R."/>
            <person name="Riddle C."/>
            <person name="Elliot D."/>
            <person name="Threadgold G."/>
            <person name="Harden G."/>
            <person name="Ware D."/>
            <person name="Begum S."/>
            <person name="Mortimore B."/>
            <person name="Kerry G."/>
            <person name="Heath P."/>
            <person name="Phillimore B."/>
            <person name="Tracey A."/>
            <person name="Corby N."/>
            <person name="Dunn M."/>
            <person name="Johnson C."/>
            <person name="Wood J."/>
            <person name="Clark S."/>
            <person name="Pelan S."/>
            <person name="Griffiths G."/>
            <person name="Smith M."/>
            <person name="Glithero R."/>
            <person name="Howden P."/>
            <person name="Barker N."/>
            <person name="Lloyd C."/>
            <person name="Stevens C."/>
            <person name="Harley J."/>
            <person name="Holt K."/>
            <person name="Panagiotidis G."/>
            <person name="Lovell J."/>
            <person name="Beasley H."/>
            <person name="Henderson C."/>
            <person name="Gordon D."/>
            <person name="Auger K."/>
            <person name="Wright D."/>
            <person name="Collins J."/>
            <person name="Raisen C."/>
            <person name="Dyer L."/>
            <person name="Leung K."/>
            <person name="Robertson L."/>
            <person name="Ambridge K."/>
            <person name="Leongamornlert D."/>
            <person name="McGuire S."/>
            <person name="Gilderthorp R."/>
            <person name="Griffiths C."/>
            <person name="Manthravadi D."/>
            <person name="Nichol S."/>
            <person name="Barker G."/>
            <person name="Whitehead S."/>
            <person name="Kay M."/>
            <person name="Brown J."/>
            <person name="Murnane C."/>
            <person name="Gray E."/>
            <person name="Humphries M."/>
            <person name="Sycamore N."/>
            <person name="Barker D."/>
            <person name="Saunders D."/>
            <person name="Wallis J."/>
            <person name="Babbage A."/>
            <person name="Hammond S."/>
            <person name="Mashreghi-Mohammadi M."/>
            <person name="Barr L."/>
            <person name="Martin S."/>
            <person name="Wray P."/>
            <person name="Ellington A."/>
            <person name="Matthews N."/>
            <person name="Ellwood M."/>
            <person name="Woodmansey R."/>
            <person name="Clark G."/>
            <person name="Cooper J."/>
            <person name="Tromans A."/>
            <person name="Grafham D."/>
            <person name="Skuce C."/>
            <person name="Pandian R."/>
            <person name="Andrews R."/>
            <person name="Harrison E."/>
            <person name="Kimberley A."/>
            <person name="Garnett J."/>
            <person name="Fosker N."/>
            <person name="Hall R."/>
            <person name="Garner P."/>
            <person name="Kelly D."/>
            <person name="Bird C."/>
            <person name="Palmer S."/>
            <person name="Gehring I."/>
            <person name="Berger A."/>
            <person name="Dooley C.M."/>
            <person name="Ersan-Urun Z."/>
            <person name="Eser C."/>
            <person name="Geiger H."/>
            <person name="Geisler M."/>
            <person name="Karotki L."/>
            <person name="Kirn A."/>
            <person name="Konantz J."/>
            <person name="Konantz M."/>
            <person name="Oberlander M."/>
            <person name="Rudolph-Geiger S."/>
            <person name="Teucke M."/>
            <person name="Lanz C."/>
            <person name="Raddatz G."/>
            <person name="Osoegawa K."/>
            <person name="Zhu B."/>
            <person name="Rapp A."/>
            <person name="Widaa S."/>
            <person name="Langford C."/>
            <person name="Yang F."/>
            <person name="Schuster S.C."/>
            <person name="Carter N.P."/>
            <person name="Harrow J."/>
            <person name="Ning Z."/>
            <person name="Herrero J."/>
            <person name="Searle S.M."/>
            <person name="Enright A."/>
            <person name="Geisler R."/>
            <person name="Plasterk R.H."/>
            <person name="Lee C."/>
            <person name="Westerfield M."/>
            <person name="de Jong P.J."/>
            <person name="Zon L.I."/>
            <person name="Postlethwait J.H."/>
            <person name="Nusslein-Volhard C."/>
            <person name="Hubbard T.J."/>
            <person name="Roest Crollius H."/>
            <person name="Rogers J."/>
            <person name="Stemple D.L."/>
        </authorList>
    </citation>
    <scope>NUCLEOTIDE SEQUENCE [LARGE SCALE GENOMIC DNA]</scope>
    <source>
        <strain>Tuebingen</strain>
    </source>
</reference>
<organism>
    <name type="scientific">Danio rerio</name>
    <name type="common">Zebrafish</name>
    <name type="synonym">Brachydanio rerio</name>
    <dbReference type="NCBI Taxonomy" id="7955"/>
    <lineage>
        <taxon>Eukaryota</taxon>
        <taxon>Metazoa</taxon>
        <taxon>Chordata</taxon>
        <taxon>Craniata</taxon>
        <taxon>Vertebrata</taxon>
        <taxon>Euteleostomi</taxon>
        <taxon>Actinopterygii</taxon>
        <taxon>Neopterygii</taxon>
        <taxon>Teleostei</taxon>
        <taxon>Ostariophysi</taxon>
        <taxon>Cypriniformes</taxon>
        <taxon>Danionidae</taxon>
        <taxon>Danioninae</taxon>
        <taxon>Danio</taxon>
    </lineage>
</organism>
<evidence type="ECO:0000250" key="1"/>
<evidence type="ECO:0000250" key="2">
    <source>
        <dbReference type="UniProtKB" id="Q87VB1"/>
    </source>
</evidence>
<evidence type="ECO:0000250" key="3">
    <source>
        <dbReference type="UniProtKB" id="Q9BVL4"/>
    </source>
</evidence>
<evidence type="ECO:0000255" key="4"/>
<evidence type="ECO:0000256" key="5">
    <source>
        <dbReference type="SAM" id="MobiDB-lite"/>
    </source>
</evidence>
<evidence type="ECO:0000305" key="6"/>
<evidence type="ECO:0000312" key="7">
    <source>
        <dbReference type="EMBL" id="CAK04189.1"/>
    </source>
</evidence>